<reference key="1">
    <citation type="submission" date="2006-04" db="EMBL/GenBank/DDBJ databases">
        <title>OSCAR-like transcript-2 (OLT-2) mRNA.</title>
        <authorList>
            <person name="Barrow A.D."/>
            <person name="de Bono B."/>
            <person name="Trowsdale J."/>
        </authorList>
    </citation>
    <scope>NUCLEOTIDE SEQUENCE [MRNA] (ISOFORM 1)</scope>
    <scope>VARIANT ARG-111</scope>
    <source>
        <tissue>Bone marrow</tissue>
    </source>
</reference>
<reference key="2">
    <citation type="journal article" date="2004" name="Nat. Genet.">
        <title>Complete sequencing and characterization of 21,243 full-length human cDNAs.</title>
        <authorList>
            <person name="Ota T."/>
            <person name="Suzuki Y."/>
            <person name="Nishikawa T."/>
            <person name="Otsuki T."/>
            <person name="Sugiyama T."/>
            <person name="Irie R."/>
            <person name="Wakamatsu A."/>
            <person name="Hayashi K."/>
            <person name="Sato H."/>
            <person name="Nagai K."/>
            <person name="Kimura K."/>
            <person name="Makita H."/>
            <person name="Sekine M."/>
            <person name="Obayashi M."/>
            <person name="Nishi T."/>
            <person name="Shibahara T."/>
            <person name="Tanaka T."/>
            <person name="Ishii S."/>
            <person name="Yamamoto J."/>
            <person name="Saito K."/>
            <person name="Kawai Y."/>
            <person name="Isono Y."/>
            <person name="Nakamura Y."/>
            <person name="Nagahari K."/>
            <person name="Murakami K."/>
            <person name="Yasuda T."/>
            <person name="Iwayanagi T."/>
            <person name="Wagatsuma M."/>
            <person name="Shiratori A."/>
            <person name="Sudo H."/>
            <person name="Hosoiri T."/>
            <person name="Kaku Y."/>
            <person name="Kodaira H."/>
            <person name="Kondo H."/>
            <person name="Sugawara M."/>
            <person name="Takahashi M."/>
            <person name="Kanda K."/>
            <person name="Yokoi T."/>
            <person name="Furuya T."/>
            <person name="Kikkawa E."/>
            <person name="Omura Y."/>
            <person name="Abe K."/>
            <person name="Kamihara K."/>
            <person name="Katsuta N."/>
            <person name="Sato K."/>
            <person name="Tanikawa M."/>
            <person name="Yamazaki M."/>
            <person name="Ninomiya K."/>
            <person name="Ishibashi T."/>
            <person name="Yamashita H."/>
            <person name="Murakawa K."/>
            <person name="Fujimori K."/>
            <person name="Tanai H."/>
            <person name="Kimata M."/>
            <person name="Watanabe M."/>
            <person name="Hiraoka S."/>
            <person name="Chiba Y."/>
            <person name="Ishida S."/>
            <person name="Ono Y."/>
            <person name="Takiguchi S."/>
            <person name="Watanabe S."/>
            <person name="Yosida M."/>
            <person name="Hotuta T."/>
            <person name="Kusano J."/>
            <person name="Kanehori K."/>
            <person name="Takahashi-Fujii A."/>
            <person name="Hara H."/>
            <person name="Tanase T.-O."/>
            <person name="Nomura Y."/>
            <person name="Togiya S."/>
            <person name="Komai F."/>
            <person name="Hara R."/>
            <person name="Takeuchi K."/>
            <person name="Arita M."/>
            <person name="Imose N."/>
            <person name="Musashino K."/>
            <person name="Yuuki H."/>
            <person name="Oshima A."/>
            <person name="Sasaki N."/>
            <person name="Aotsuka S."/>
            <person name="Yoshikawa Y."/>
            <person name="Matsunawa H."/>
            <person name="Ichihara T."/>
            <person name="Shiohata N."/>
            <person name="Sano S."/>
            <person name="Moriya S."/>
            <person name="Momiyama H."/>
            <person name="Satoh N."/>
            <person name="Takami S."/>
            <person name="Terashima Y."/>
            <person name="Suzuki O."/>
            <person name="Nakagawa S."/>
            <person name="Senoh A."/>
            <person name="Mizoguchi H."/>
            <person name="Goto Y."/>
            <person name="Shimizu F."/>
            <person name="Wakebe H."/>
            <person name="Hishigaki H."/>
            <person name="Watanabe T."/>
            <person name="Sugiyama A."/>
            <person name="Takemoto M."/>
            <person name="Kawakami B."/>
            <person name="Yamazaki M."/>
            <person name="Watanabe K."/>
            <person name="Kumagai A."/>
            <person name="Itakura S."/>
            <person name="Fukuzumi Y."/>
            <person name="Fujimori Y."/>
            <person name="Komiyama M."/>
            <person name="Tashiro H."/>
            <person name="Tanigami A."/>
            <person name="Fujiwara T."/>
            <person name="Ono T."/>
            <person name="Yamada K."/>
            <person name="Fujii Y."/>
            <person name="Ozaki K."/>
            <person name="Hirao M."/>
            <person name="Ohmori Y."/>
            <person name="Kawabata A."/>
            <person name="Hikiji T."/>
            <person name="Kobatake N."/>
            <person name="Inagaki H."/>
            <person name="Ikema Y."/>
            <person name="Okamoto S."/>
            <person name="Okitani R."/>
            <person name="Kawakami T."/>
            <person name="Noguchi S."/>
            <person name="Itoh T."/>
            <person name="Shigeta K."/>
            <person name="Senba T."/>
            <person name="Matsumura K."/>
            <person name="Nakajima Y."/>
            <person name="Mizuno T."/>
            <person name="Morinaga M."/>
            <person name="Sasaki M."/>
            <person name="Togashi T."/>
            <person name="Oyama M."/>
            <person name="Hata H."/>
            <person name="Watanabe M."/>
            <person name="Komatsu T."/>
            <person name="Mizushima-Sugano J."/>
            <person name="Satoh T."/>
            <person name="Shirai Y."/>
            <person name="Takahashi Y."/>
            <person name="Nakagawa K."/>
            <person name="Okumura K."/>
            <person name="Nagase T."/>
            <person name="Nomura N."/>
            <person name="Kikuchi H."/>
            <person name="Masuho Y."/>
            <person name="Yamashita R."/>
            <person name="Nakai K."/>
            <person name="Yada T."/>
            <person name="Nakamura Y."/>
            <person name="Ohara O."/>
            <person name="Isogai T."/>
            <person name="Sugano S."/>
        </authorList>
    </citation>
    <scope>NUCLEOTIDE SEQUENCE [LARGE SCALE MRNA] (ISOFORM 2)</scope>
    <scope>VARIANT ARG-111</scope>
    <source>
        <tissue>Testis</tissue>
    </source>
</reference>
<reference key="3">
    <citation type="journal article" date="2004" name="Nature">
        <title>The DNA sequence and biology of human chromosome 19.</title>
        <authorList>
            <person name="Grimwood J."/>
            <person name="Gordon L.A."/>
            <person name="Olsen A.S."/>
            <person name="Terry A."/>
            <person name="Schmutz J."/>
            <person name="Lamerdin J.E."/>
            <person name="Hellsten U."/>
            <person name="Goodstein D."/>
            <person name="Couronne O."/>
            <person name="Tran-Gyamfi M."/>
            <person name="Aerts A."/>
            <person name="Altherr M."/>
            <person name="Ashworth L."/>
            <person name="Bajorek E."/>
            <person name="Black S."/>
            <person name="Branscomb E."/>
            <person name="Caenepeel S."/>
            <person name="Carrano A.V."/>
            <person name="Caoile C."/>
            <person name="Chan Y.M."/>
            <person name="Christensen M."/>
            <person name="Cleland C.A."/>
            <person name="Copeland A."/>
            <person name="Dalin E."/>
            <person name="Dehal P."/>
            <person name="Denys M."/>
            <person name="Detter J.C."/>
            <person name="Escobar J."/>
            <person name="Flowers D."/>
            <person name="Fotopulos D."/>
            <person name="Garcia C."/>
            <person name="Georgescu A.M."/>
            <person name="Glavina T."/>
            <person name="Gomez M."/>
            <person name="Gonzales E."/>
            <person name="Groza M."/>
            <person name="Hammon N."/>
            <person name="Hawkins T."/>
            <person name="Haydu L."/>
            <person name="Ho I."/>
            <person name="Huang W."/>
            <person name="Israni S."/>
            <person name="Jett J."/>
            <person name="Kadner K."/>
            <person name="Kimball H."/>
            <person name="Kobayashi A."/>
            <person name="Larionov V."/>
            <person name="Leem S.-H."/>
            <person name="Lopez F."/>
            <person name="Lou Y."/>
            <person name="Lowry S."/>
            <person name="Malfatti S."/>
            <person name="Martinez D."/>
            <person name="McCready P.M."/>
            <person name="Medina C."/>
            <person name="Morgan J."/>
            <person name="Nelson K."/>
            <person name="Nolan M."/>
            <person name="Ovcharenko I."/>
            <person name="Pitluck S."/>
            <person name="Pollard M."/>
            <person name="Popkie A.P."/>
            <person name="Predki P."/>
            <person name="Quan G."/>
            <person name="Ramirez L."/>
            <person name="Rash S."/>
            <person name="Retterer J."/>
            <person name="Rodriguez A."/>
            <person name="Rogers S."/>
            <person name="Salamov A."/>
            <person name="Salazar A."/>
            <person name="She X."/>
            <person name="Smith D."/>
            <person name="Slezak T."/>
            <person name="Solovyev V."/>
            <person name="Thayer N."/>
            <person name="Tice H."/>
            <person name="Tsai M."/>
            <person name="Ustaszewska A."/>
            <person name="Vo N."/>
            <person name="Wagner M."/>
            <person name="Wheeler J."/>
            <person name="Wu K."/>
            <person name="Xie G."/>
            <person name="Yang J."/>
            <person name="Dubchak I."/>
            <person name="Furey T.S."/>
            <person name="DeJong P."/>
            <person name="Dickson M."/>
            <person name="Gordon D."/>
            <person name="Eichler E.E."/>
            <person name="Pennacchio L.A."/>
            <person name="Richardson P."/>
            <person name="Stubbs L."/>
            <person name="Rokhsar D.S."/>
            <person name="Myers R.M."/>
            <person name="Rubin E.M."/>
            <person name="Lucas S.M."/>
        </authorList>
    </citation>
    <scope>NUCLEOTIDE SEQUENCE [LARGE SCALE GENOMIC DNA]</scope>
</reference>
<reference key="4">
    <citation type="journal article" date="2015" name="J. Immunol.">
        <title>TARM1 is a novel leukocyte receptor complex-encoded ITAM receptor that costimulates proinflammatory cytokine secretion by macrophages and neutrophils.</title>
        <authorList>
            <person name="Radjabova V."/>
            <person name="Mastroeni P."/>
            <person name="Skjoedt K."/>
            <person name="Zaccone P."/>
            <person name="de Bono B."/>
            <person name="Goodall J.C."/>
            <person name="Chilvers E.R."/>
            <person name="Juss J.K."/>
            <person name="Jones D.C."/>
            <person name="Trowsdale J."/>
            <person name="Barrow A.D."/>
        </authorList>
    </citation>
    <scope>FUNCTION</scope>
    <scope>INTERACTION WITH FCER1G</scope>
    <scope>SUBCELLULAR LOCATION</scope>
    <scope>TISSUE SPECIFICITY</scope>
    <scope>GLYCOSYLATION</scope>
</reference>
<comment type="function">
    <text evidence="1 5">May act as receptor (By similarity). Negatively regulates TCR-mediated CD4(+) T cell proliferation and activation, possibly by binding an unknown ligand on the T cell surface (PubMed:26311901). Enhances Toll-like receptor-mediated production of pro-inflammatory cytokines by macrophages and neutrophils (By similarity).</text>
</comment>
<comment type="subunit">
    <text evidence="5">Interacts with Fc receptor gamma chain FCER1G.</text>
</comment>
<comment type="subcellular location">
    <subcellularLocation>
        <location evidence="5">Cell membrane</location>
        <topology evidence="8">Single-pass type I membrane protein</topology>
    </subcellularLocation>
</comment>
<comment type="alternative products">
    <event type="alternative splicing"/>
    <isoform>
        <id>B6A8C7-1</id>
        <name>1</name>
        <sequence type="displayed"/>
    </isoform>
    <isoform>
        <id>B6A8C7-2</id>
        <name>2</name>
        <sequence type="described" ref="VSP_039225"/>
    </isoform>
</comment>
<comment type="tissue specificity">
    <text evidence="5">Expressed in fetal and adult liver, lung, testis, thymus and spleen. Expressed in blood neutrophils.</text>
</comment>
<comment type="PTM">
    <text evidence="5">N-glycosylated.</text>
</comment>
<gene>
    <name type="primary">TARM1</name>
</gene>
<name>TARM1_HUMAN</name>
<evidence type="ECO:0000250" key="1">
    <source>
        <dbReference type="UniProtKB" id="B6A8R8"/>
    </source>
</evidence>
<evidence type="ECO:0000255" key="2"/>
<evidence type="ECO:0000255" key="3">
    <source>
        <dbReference type="PROSITE-ProRule" id="PRU00114"/>
    </source>
</evidence>
<evidence type="ECO:0000269" key="4">
    <source>
    </source>
</evidence>
<evidence type="ECO:0000269" key="5">
    <source>
    </source>
</evidence>
<evidence type="ECO:0000269" key="6">
    <source ref="1"/>
</evidence>
<evidence type="ECO:0000303" key="7">
    <source>
    </source>
</evidence>
<evidence type="ECO:0000305" key="8"/>
<accession>B6A8C7</accession>
<accession>B4DWY4</accession>
<sequence>MIPKLLSLLCFRLCVGQGDTRGDGSLPKPSLSAWPSSVVPANSNVTLRCWTPARGVSFVLRKGGIILESPKPLDSTEGAAEFHLNNLKVRNAGEYTCEYYRKASPHILSQHSDVLLLLVTGHLSKPFLRTYQRGTVTAGGRVTLQCQKRDQLFVPIMFALLKAGTPSPIQLQSPAGKEIDFSLVDVTAGDAGNYSCMYYQTKSPFWASEPSDQLEILVTVPPGTTSSNYSLGNFVRLGLAAVIVVIMGAFLVEAWYSRNVSPGESEAFKPE</sequence>
<protein>
    <recommendedName>
        <fullName>T-cell-interacting, activating receptor on myeloid cells protein 1</fullName>
    </recommendedName>
    <alternativeName>
        <fullName>OSCAR-like transcript-2 protein</fullName>
        <shortName>OLT-2</shortName>
    </alternativeName>
</protein>
<feature type="signal peptide" evidence="2">
    <location>
        <begin position="1"/>
        <end position="16"/>
    </location>
</feature>
<feature type="chain" id="PRO_0000394231" description="T-cell-interacting, activating receptor on myeloid cells protein 1">
    <location>
        <begin position="17"/>
        <end position="271"/>
    </location>
</feature>
<feature type="topological domain" description="Extracellular" evidence="2">
    <location>
        <begin position="17"/>
        <end position="236"/>
    </location>
</feature>
<feature type="transmembrane region" description="Helical" evidence="2">
    <location>
        <begin position="237"/>
        <end position="257"/>
    </location>
</feature>
<feature type="topological domain" description="Cytoplasmic" evidence="2">
    <location>
        <begin position="258"/>
        <end position="271"/>
    </location>
</feature>
<feature type="domain" description="Ig-like C2-type 1" evidence="3">
    <location>
        <begin position="27"/>
        <end position="113"/>
    </location>
</feature>
<feature type="domain" description="Ig-like C2-type 2" evidence="3">
    <location>
        <begin position="126"/>
        <end position="212"/>
    </location>
</feature>
<feature type="glycosylation site" description="N-linked (GlcNAc...) asparagine" evidence="2">
    <location>
        <position position="44"/>
    </location>
</feature>
<feature type="disulfide bond" evidence="3">
    <location>
        <begin position="49"/>
        <end position="97"/>
    </location>
</feature>
<feature type="disulfide bond" evidence="3">
    <location>
        <begin position="146"/>
        <end position="196"/>
    </location>
</feature>
<feature type="splice variant" id="VSP_039225" description="In isoform 2." evidence="7">
    <original>MIPKLLSLLCFR</original>
    <variation>MKERKKKERKERKRKKERNG</variation>
    <location>
        <begin position="1"/>
        <end position="12"/>
    </location>
</feature>
<feature type="sequence variant" id="VAR_063151" description="In dbSNP:rs17305269.">
    <original>S</original>
    <variation>P</variation>
    <location>
        <position position="37"/>
    </location>
</feature>
<feature type="sequence variant" id="VAR_063152" description="In dbSNP:rs80087697." evidence="4 6">
    <original>H</original>
    <variation>R</variation>
    <location>
        <position position="111"/>
    </location>
</feature>
<feature type="sequence variant" id="VAR_063153" description="In dbSNP:rs77768804.">
    <original>R</original>
    <variation>W</variation>
    <location>
        <position position="258"/>
    </location>
</feature>
<dbReference type="EMBL" id="DQ479398">
    <property type="protein sequence ID" value="ABF19808.1"/>
    <property type="molecule type" value="mRNA"/>
</dbReference>
<dbReference type="EMBL" id="AK301730">
    <property type="protein sequence ID" value="BAG63196.1"/>
    <property type="molecule type" value="mRNA"/>
</dbReference>
<dbReference type="EMBL" id="AC012314">
    <property type="status" value="NOT_ANNOTATED_CDS"/>
    <property type="molecule type" value="Genomic_DNA"/>
</dbReference>
<dbReference type="CCDS" id="CCDS46173.1">
    <molecule id="B6A8C7-1"/>
</dbReference>
<dbReference type="CCDS" id="CCDS82395.1">
    <molecule id="B6A8C7-2"/>
</dbReference>
<dbReference type="RefSeq" id="NP_001129158.2">
    <molecule id="B6A8C7-1"/>
    <property type="nucleotide sequence ID" value="NM_001135686.3"/>
</dbReference>
<dbReference type="RefSeq" id="NP_001317579.1">
    <molecule id="B6A8C7-2"/>
    <property type="nucleotide sequence ID" value="NM_001330650.1"/>
</dbReference>
<dbReference type="SMR" id="B6A8C7"/>
<dbReference type="FunCoup" id="B6A8C7">
    <property type="interactions" value="11"/>
</dbReference>
<dbReference type="STRING" id="9606.ENSP00000484383"/>
<dbReference type="GlyCosmos" id="B6A8C7">
    <property type="glycosylation" value="1 site, No reported glycans"/>
</dbReference>
<dbReference type="GlyGen" id="B6A8C7">
    <property type="glycosylation" value="1 site"/>
</dbReference>
<dbReference type="iPTMnet" id="B6A8C7"/>
<dbReference type="PhosphoSitePlus" id="B6A8C7"/>
<dbReference type="BioMuta" id="TARM1"/>
<dbReference type="MassIVE" id="B6A8C7"/>
<dbReference type="PaxDb" id="9606-ENSP00000439454"/>
<dbReference type="PeptideAtlas" id="B6A8C7"/>
<dbReference type="Antibodypedia" id="65161">
    <property type="antibodies" value="80 antibodies from 15 providers"/>
</dbReference>
<dbReference type="DNASU" id="441864"/>
<dbReference type="Ensembl" id="ENST00000432826.2">
    <molecule id="B6A8C7-1"/>
    <property type="protein sequence ID" value="ENSP00000439454.1"/>
    <property type="gene ID" value="ENSG00000248385.8"/>
</dbReference>
<dbReference type="Ensembl" id="ENST00000611088.1">
    <property type="protein sequence ID" value="ENSP00000479824.1"/>
    <property type="gene ID" value="ENSG00000276145.1"/>
</dbReference>
<dbReference type="Ensembl" id="ENST00000611419.1">
    <property type="protein sequence ID" value="ENSP00000478234.1"/>
    <property type="gene ID" value="ENSG00000275806.1"/>
</dbReference>
<dbReference type="Ensembl" id="ENST00000612678.1">
    <property type="protein sequence ID" value="ENSP00000482624.1"/>
    <property type="gene ID" value="ENSG00000275123.1"/>
</dbReference>
<dbReference type="Ensembl" id="ENST00000614463.1">
    <property type="protein sequence ID" value="ENSP00000480049.1"/>
    <property type="gene ID" value="ENSG00000276355.4"/>
</dbReference>
<dbReference type="Ensembl" id="ENST00000615726.1">
    <property type="protein sequence ID" value="ENSP00000479185.1"/>
    <property type="gene ID" value="ENSG00000275384.1"/>
</dbReference>
<dbReference type="Ensembl" id="ENST00000616041.4">
    <molecule id="B6A8C7-2"/>
    <property type="protein sequence ID" value="ENSP00000484383.1"/>
    <property type="gene ID" value="ENSG00000248385.8"/>
</dbReference>
<dbReference type="Ensembl" id="ENST00000619320.1">
    <property type="protein sequence ID" value="ENSP00000479062.1"/>
    <property type="gene ID" value="ENSG00000276604.1"/>
</dbReference>
<dbReference type="Ensembl" id="ENST00000620140.4">
    <property type="protein sequence ID" value="ENSP00000477830.1"/>
    <property type="gene ID" value="ENSG00000276355.4"/>
</dbReference>
<dbReference type="Ensembl" id="ENST00000620398.1">
    <property type="protein sequence ID" value="ENSP00000479374.1"/>
    <property type="gene ID" value="ENSG00000273875.1"/>
</dbReference>
<dbReference type="Ensembl" id="ENST00000620707.1">
    <property type="protein sequence ID" value="ENSP00000480377.1"/>
    <property type="gene ID" value="ENSG00000277178.1"/>
</dbReference>
<dbReference type="Ensembl" id="ENST00000622245.1">
    <property type="protein sequence ID" value="ENSP00000478822.1"/>
    <property type="gene ID" value="ENSG00000274889.1"/>
</dbReference>
<dbReference type="GeneID" id="441864"/>
<dbReference type="KEGG" id="hsa:441864"/>
<dbReference type="MANE-Select" id="ENST00000432826.2">
    <property type="protein sequence ID" value="ENSP00000439454.1"/>
    <property type="RefSeq nucleotide sequence ID" value="NM_001135686.3"/>
    <property type="RefSeq protein sequence ID" value="NP_001129158.2"/>
</dbReference>
<dbReference type="UCSC" id="uc010yei.1">
    <molecule id="B6A8C7-1"/>
    <property type="organism name" value="human"/>
</dbReference>
<dbReference type="AGR" id="HGNC:37250"/>
<dbReference type="CTD" id="441864"/>
<dbReference type="DisGeNET" id="441864"/>
<dbReference type="GeneCards" id="TARM1"/>
<dbReference type="HGNC" id="HGNC:37250">
    <property type="gene designation" value="TARM1"/>
</dbReference>
<dbReference type="HPA" id="ENSG00000248385">
    <property type="expression patterns" value="Tissue enriched (bone)"/>
</dbReference>
<dbReference type="neXtProt" id="NX_B6A8C7"/>
<dbReference type="OpenTargets" id="ENSG00000248385"/>
<dbReference type="PharmGKB" id="PA165394443"/>
<dbReference type="VEuPathDB" id="HostDB:ENSG00000248385"/>
<dbReference type="eggNOG" id="ENOG502RYEX">
    <property type="taxonomic scope" value="Eukaryota"/>
</dbReference>
<dbReference type="GeneTree" id="ENSGT01100000263478"/>
<dbReference type="HOGENOM" id="CLU_021100_1_0_1"/>
<dbReference type="InParanoid" id="B6A8C7"/>
<dbReference type="OMA" id="TTICCSC"/>
<dbReference type="OrthoDB" id="9897029at2759"/>
<dbReference type="PAN-GO" id="B6A8C7">
    <property type="GO annotations" value="1 GO annotation based on evolutionary models"/>
</dbReference>
<dbReference type="PhylomeDB" id="B6A8C7"/>
<dbReference type="TreeFam" id="TF336644"/>
<dbReference type="PathwayCommons" id="B6A8C7"/>
<dbReference type="Reactome" id="R-HSA-6798695">
    <property type="pathway name" value="Neutrophil degranulation"/>
</dbReference>
<dbReference type="BioGRID-ORCS" id="441864">
    <property type="hits" value="15 hits in 1140 CRISPR screens"/>
</dbReference>
<dbReference type="ChiTaRS" id="TARM1">
    <property type="organism name" value="human"/>
</dbReference>
<dbReference type="GenomeRNAi" id="441864"/>
<dbReference type="Pharos" id="B6A8C7">
    <property type="development level" value="Tbio"/>
</dbReference>
<dbReference type="PRO" id="PR:B6A8C7"/>
<dbReference type="Proteomes" id="UP000005640">
    <property type="component" value="Chromosome 19"/>
</dbReference>
<dbReference type="RNAct" id="B6A8C7">
    <property type="molecule type" value="protein"/>
</dbReference>
<dbReference type="Bgee" id="ENSG00000248385">
    <property type="expression patterns" value="Expressed in male germ line stem cell (sensu Vertebrata) in testis and 20 other cell types or tissues"/>
</dbReference>
<dbReference type="ExpressionAtlas" id="B6A8C7">
    <property type="expression patterns" value="baseline and differential"/>
</dbReference>
<dbReference type="GO" id="GO:0005886">
    <property type="term" value="C:plasma membrane"/>
    <property type="evidence" value="ECO:0000314"/>
    <property type="project" value="UniProtKB"/>
</dbReference>
<dbReference type="GO" id="GO:0035579">
    <property type="term" value="C:specific granule membrane"/>
    <property type="evidence" value="ECO:0000304"/>
    <property type="project" value="Reactome"/>
</dbReference>
<dbReference type="GO" id="GO:0070821">
    <property type="term" value="C:tertiary granule membrane"/>
    <property type="evidence" value="ECO:0000304"/>
    <property type="project" value="Reactome"/>
</dbReference>
<dbReference type="GO" id="GO:0034987">
    <property type="term" value="F:immunoglobulin receptor binding"/>
    <property type="evidence" value="ECO:0000353"/>
    <property type="project" value="UniProtKB"/>
</dbReference>
<dbReference type="GO" id="GO:0002250">
    <property type="term" value="P:adaptive immune response"/>
    <property type="evidence" value="ECO:0007669"/>
    <property type="project" value="UniProtKB-KW"/>
</dbReference>
<dbReference type="GO" id="GO:0002764">
    <property type="term" value="P:immune response-regulating signaling pathway"/>
    <property type="evidence" value="ECO:0000318"/>
    <property type="project" value="GO_Central"/>
</dbReference>
<dbReference type="GO" id="GO:0045087">
    <property type="term" value="P:innate immune response"/>
    <property type="evidence" value="ECO:0007669"/>
    <property type="project" value="UniProtKB-KW"/>
</dbReference>
<dbReference type="GO" id="GO:2000515">
    <property type="term" value="P:negative regulation of CD4-positive, alpha-beta T cell activation"/>
    <property type="evidence" value="ECO:0000314"/>
    <property type="project" value="UniProtKB"/>
</dbReference>
<dbReference type="FunFam" id="2.60.40.10:FF:000049">
    <property type="entry name" value="Leukocyte immunoglobulin-like receptor subfamily B member 1"/>
    <property type="match status" value="2"/>
</dbReference>
<dbReference type="Gene3D" id="2.60.40.10">
    <property type="entry name" value="Immunoglobulins"/>
    <property type="match status" value="2"/>
</dbReference>
<dbReference type="InterPro" id="IPR036179">
    <property type="entry name" value="Ig-like_dom_sf"/>
</dbReference>
<dbReference type="InterPro" id="IPR013783">
    <property type="entry name" value="Ig-like_fold"/>
</dbReference>
<dbReference type="InterPro" id="IPR050412">
    <property type="entry name" value="Ig-like_Receptors_ImmuneReg"/>
</dbReference>
<dbReference type="InterPro" id="IPR003599">
    <property type="entry name" value="Ig_sub"/>
</dbReference>
<dbReference type="PANTHER" id="PTHR11738">
    <property type="entry name" value="MHC CLASS I NK CELL RECEPTOR"/>
    <property type="match status" value="1"/>
</dbReference>
<dbReference type="PANTHER" id="PTHR11738:SF157">
    <property type="entry name" value="T-CELL-INTERACTING, ACTIVATING RECEPTOR ON MYELOID CELLS PROTEIN 1"/>
    <property type="match status" value="1"/>
</dbReference>
<dbReference type="Pfam" id="PF13895">
    <property type="entry name" value="Ig_2"/>
    <property type="match status" value="1"/>
</dbReference>
<dbReference type="SMART" id="SM00409">
    <property type="entry name" value="IG"/>
    <property type="match status" value="2"/>
</dbReference>
<dbReference type="SUPFAM" id="SSF48726">
    <property type="entry name" value="Immunoglobulin"/>
    <property type="match status" value="2"/>
</dbReference>
<proteinExistence type="evidence at protein level"/>
<keyword id="KW-1064">Adaptive immunity</keyword>
<keyword id="KW-0025">Alternative splicing</keyword>
<keyword id="KW-1003">Cell membrane</keyword>
<keyword id="KW-1015">Disulfide bond</keyword>
<keyword id="KW-0325">Glycoprotein</keyword>
<keyword id="KW-0391">Immunity</keyword>
<keyword id="KW-0393">Immunoglobulin domain</keyword>
<keyword id="KW-0399">Innate immunity</keyword>
<keyword id="KW-0472">Membrane</keyword>
<keyword id="KW-1267">Proteomics identification</keyword>
<keyword id="KW-0675">Receptor</keyword>
<keyword id="KW-1185">Reference proteome</keyword>
<keyword id="KW-0677">Repeat</keyword>
<keyword id="KW-0732">Signal</keyword>
<keyword id="KW-0812">Transmembrane</keyword>
<keyword id="KW-1133">Transmembrane helix</keyword>
<organism>
    <name type="scientific">Homo sapiens</name>
    <name type="common">Human</name>
    <dbReference type="NCBI Taxonomy" id="9606"/>
    <lineage>
        <taxon>Eukaryota</taxon>
        <taxon>Metazoa</taxon>
        <taxon>Chordata</taxon>
        <taxon>Craniata</taxon>
        <taxon>Vertebrata</taxon>
        <taxon>Euteleostomi</taxon>
        <taxon>Mammalia</taxon>
        <taxon>Eutheria</taxon>
        <taxon>Euarchontoglires</taxon>
        <taxon>Primates</taxon>
        <taxon>Haplorrhini</taxon>
        <taxon>Catarrhini</taxon>
        <taxon>Hominidae</taxon>
        <taxon>Homo</taxon>
    </lineage>
</organism>